<reference key="1">
    <citation type="submission" date="2005-08" db="EMBL/GenBank/DDBJ databases">
        <title>Complete sequence of Chlorobium chlorochromatii CaD3.</title>
        <authorList>
            <consortium name="US DOE Joint Genome Institute"/>
            <person name="Copeland A."/>
            <person name="Lucas S."/>
            <person name="Lapidus A."/>
            <person name="Barry K."/>
            <person name="Detter J.C."/>
            <person name="Glavina T."/>
            <person name="Hammon N."/>
            <person name="Israni S."/>
            <person name="Pitluck S."/>
            <person name="Bryant D."/>
            <person name="Schmutz J."/>
            <person name="Larimer F."/>
            <person name="Land M."/>
            <person name="Kyrpides N."/>
            <person name="Ivanova N."/>
            <person name="Richardson P."/>
        </authorList>
    </citation>
    <scope>NUCLEOTIDE SEQUENCE [LARGE SCALE GENOMIC DNA]</scope>
    <source>
        <strain>CaD3</strain>
    </source>
</reference>
<gene>
    <name type="ordered locus">Cag_0935</name>
</gene>
<organism>
    <name type="scientific">Chlorobium chlorochromatii (strain CaD3)</name>
    <dbReference type="NCBI Taxonomy" id="340177"/>
    <lineage>
        <taxon>Bacteria</taxon>
        <taxon>Pseudomonadati</taxon>
        <taxon>Chlorobiota</taxon>
        <taxon>Chlorobiia</taxon>
        <taxon>Chlorobiales</taxon>
        <taxon>Chlorobiaceae</taxon>
        <taxon>Chlorobium/Pelodictyon group</taxon>
        <taxon>Chlorobium</taxon>
    </lineage>
</organism>
<comment type="subcellular location">
    <subcellularLocation>
        <location evidence="1">Cell inner membrane</location>
        <topology evidence="1">Multi-pass membrane protein</topology>
    </subcellularLocation>
</comment>
<comment type="similarity">
    <text evidence="1">Belongs to the UPF0761 family.</text>
</comment>
<proteinExistence type="inferred from homology"/>
<keyword id="KW-0997">Cell inner membrane</keyword>
<keyword id="KW-1003">Cell membrane</keyword>
<keyword id="KW-0472">Membrane</keyword>
<keyword id="KW-0812">Transmembrane</keyword>
<keyword id="KW-1133">Transmembrane helix</keyword>
<dbReference type="EMBL" id="CP000108">
    <property type="protein sequence ID" value="ABB28198.1"/>
    <property type="molecule type" value="Genomic_DNA"/>
</dbReference>
<dbReference type="SMR" id="Q3AS27"/>
<dbReference type="STRING" id="340177.Cag_0935"/>
<dbReference type="KEGG" id="cch:Cag_0935"/>
<dbReference type="eggNOG" id="COG1295">
    <property type="taxonomic scope" value="Bacteria"/>
</dbReference>
<dbReference type="HOGENOM" id="CLU_032288_1_0_10"/>
<dbReference type="OrthoDB" id="9808671at2"/>
<dbReference type="GO" id="GO:0005886">
    <property type="term" value="C:plasma membrane"/>
    <property type="evidence" value="ECO:0007669"/>
    <property type="project" value="UniProtKB-SubCell"/>
</dbReference>
<dbReference type="HAMAP" id="MF_00672">
    <property type="entry name" value="UPF0761"/>
    <property type="match status" value="1"/>
</dbReference>
<dbReference type="InterPro" id="IPR023679">
    <property type="entry name" value="UPF0761_bac"/>
</dbReference>
<dbReference type="InterPro" id="IPR017039">
    <property type="entry name" value="Virul_fac_BrkB"/>
</dbReference>
<dbReference type="NCBIfam" id="TIGR00765">
    <property type="entry name" value="yihY_not_rbn"/>
    <property type="match status" value="1"/>
</dbReference>
<dbReference type="PANTHER" id="PTHR30213">
    <property type="entry name" value="INNER MEMBRANE PROTEIN YHJD"/>
    <property type="match status" value="1"/>
</dbReference>
<dbReference type="PANTHER" id="PTHR30213:SF0">
    <property type="entry name" value="UPF0761 MEMBRANE PROTEIN YIHY"/>
    <property type="match status" value="1"/>
</dbReference>
<dbReference type="Pfam" id="PF03631">
    <property type="entry name" value="Virul_fac_BrkB"/>
    <property type="match status" value="1"/>
</dbReference>
<accession>Q3AS27</accession>
<feature type="chain" id="PRO_0000391026" description="UPF0761 membrane protein Cag_0935">
    <location>
        <begin position="1"/>
        <end position="432"/>
    </location>
</feature>
<feature type="transmembrane region" description="Helical" evidence="1">
    <location>
        <begin position="52"/>
        <end position="72"/>
    </location>
</feature>
<feature type="transmembrane region" description="Helical" evidence="1">
    <location>
        <begin position="108"/>
        <end position="128"/>
    </location>
</feature>
<feature type="transmembrane region" description="Helical" evidence="1">
    <location>
        <begin position="148"/>
        <end position="168"/>
    </location>
</feature>
<feature type="transmembrane region" description="Helical" evidence="1">
    <location>
        <begin position="190"/>
        <end position="210"/>
    </location>
</feature>
<feature type="transmembrane region" description="Helical" evidence="1">
    <location>
        <begin position="220"/>
        <end position="240"/>
    </location>
</feature>
<feature type="transmembrane region" description="Helical" evidence="1">
    <location>
        <begin position="254"/>
        <end position="274"/>
    </location>
</feature>
<evidence type="ECO:0000255" key="1">
    <source>
        <dbReference type="HAMAP-Rule" id="MF_00672"/>
    </source>
</evidence>
<sequence>MLMKKVPHIIHRANQSGGKRYERMVAFVAFFRTNLLHDRIFISAGSLAFQTLLSIVPVLAVVLSVLNLFEVFTPFQHSLETFLVENFMPATGRLLHGYLLEFVGKTGNIPLLGSLLLFVIALSLLSTVDQTLNDIWGIRAPRKALQGFTLYWTVLTLGPLLIVSSLAASSYVWYTIFTDEGALFELKTRLLALFPFINSIVAFFLLYMLVPKRRVRIAHAFAGALVASLLLELSKRWFLFYVTHVATFEHIYGALSVVPMLFFWVYLAWVVVLVGAEFVYCLGAFAPSTPTAEAQGSLRYLSLPLAVLATLHNAIEKGAPLSLKSLSRELSTLPFNLLRDMVDLLLDRQVLHLSTRGELALSRNLHAMSLYELYQIIPQPINATEKSLLFSESKSVHLAPLSLEVEACLQERMATPIAELLQHSFLKASTVD</sequence>
<protein>
    <recommendedName>
        <fullName evidence="1">UPF0761 membrane protein Cag_0935</fullName>
    </recommendedName>
</protein>
<name>Y935_CHLCH</name>